<feature type="chain" id="PRO_0000277362" description="Uncharacterized protein ycf91">
    <location>
        <begin position="1"/>
        <end position="117"/>
    </location>
</feature>
<protein>
    <recommendedName>
        <fullName>Uncharacterized protein ycf91</fullName>
    </recommendedName>
</protein>
<comment type="subcellular location">
    <subcellularLocation>
        <location>Plastid</location>
        <location>Chloroplast</location>
    </subcellularLocation>
</comment>
<comment type="similarity">
    <text evidence="1">Belongs to the ycf91 family.</text>
</comment>
<sequence length="117" mass="13750">MYQSINKLLLQHQKKYLRYVDTTDYSSENLDLDQFSYFIITINKTDKCILIEQFCYNAEGHIYSIFFKGPTAKHLSSIICHFQQLNTIISTAHAIYLGRELMKSELALVLDQQYIQD</sequence>
<dbReference type="EMBL" id="AP006715">
    <property type="protein sequence ID" value="BAE92341.1"/>
    <property type="molecule type" value="Genomic_DNA"/>
</dbReference>
<dbReference type="RefSeq" id="YP_536898.1">
    <property type="nucleotide sequence ID" value="NC_007932.1"/>
</dbReference>
<dbReference type="GO" id="GO:0009507">
    <property type="term" value="C:chloroplast"/>
    <property type="evidence" value="ECO:0007669"/>
    <property type="project" value="UniProtKB-SubCell"/>
</dbReference>
<dbReference type="InterPro" id="IPR025595">
    <property type="entry name" value="PterinBD-DUF4346"/>
</dbReference>
<dbReference type="InterPro" id="IPR017260">
    <property type="entry name" value="UCP037673"/>
</dbReference>
<dbReference type="Pfam" id="PF14251">
    <property type="entry name" value="PterinBD-DUF4346"/>
    <property type="match status" value="1"/>
</dbReference>
<dbReference type="PIRSF" id="PIRSF037673">
    <property type="entry name" value="UCP037673"/>
    <property type="match status" value="1"/>
</dbReference>
<gene>
    <name type="primary">ycf91</name>
</gene>
<reference key="1">
    <citation type="submission" date="2003-11" db="EMBL/GenBank/DDBJ databases">
        <title>Whole genome sequence of Porphyra yezoensis chloroplast.</title>
        <authorList>
            <person name="Kunimoto M."/>
            <person name="Morishima K."/>
            <person name="Yoshikawa M."/>
            <person name="Fukuda S."/>
            <person name="Kobayashi T."/>
            <person name="Kobayashi M."/>
            <person name="Okazaki T."/>
            <person name="Ohara I."/>
            <person name="Nakayama I."/>
        </authorList>
    </citation>
    <scope>NUCLEOTIDE SEQUENCE [LARGE SCALE GENOMIC DNA]</scope>
    <source>
        <strain>U-51</strain>
    </source>
</reference>
<accession>Q1XDS0</accession>
<organism>
    <name type="scientific">Pyropia yezoensis</name>
    <name type="common">Susabi-nori</name>
    <name type="synonym">Porphyra yezoensis</name>
    <dbReference type="NCBI Taxonomy" id="2788"/>
    <lineage>
        <taxon>Eukaryota</taxon>
        <taxon>Rhodophyta</taxon>
        <taxon>Bangiophyceae</taxon>
        <taxon>Bangiales</taxon>
        <taxon>Bangiaceae</taxon>
        <taxon>Pyropia</taxon>
    </lineage>
</organism>
<evidence type="ECO:0000305" key="1"/>
<geneLocation type="chloroplast"/>
<proteinExistence type="inferred from homology"/>
<name>YCF91_PYRYE</name>
<keyword id="KW-0150">Chloroplast</keyword>
<keyword id="KW-0934">Plastid</keyword>